<feature type="chain" id="PRO_0000204291" description="Hemocyanin A chain">
    <location>
        <begin position="1"/>
        <end position="657"/>
    </location>
</feature>
<feature type="region of interest" description="Disordered" evidence="1">
    <location>
        <begin position="594"/>
        <end position="616"/>
    </location>
</feature>
<feature type="binding site" evidence="2 6 7">
    <location>
        <position position="194"/>
    </location>
    <ligand>
        <name>Cu cation</name>
        <dbReference type="ChEBI" id="CHEBI:23378"/>
        <label>A</label>
    </ligand>
</feature>
<feature type="binding site" evidence="2 6 7">
    <location>
        <position position="198"/>
    </location>
    <ligand>
        <name>Cu cation</name>
        <dbReference type="ChEBI" id="CHEBI:23378"/>
        <label>A</label>
    </ligand>
</feature>
<feature type="binding site" evidence="2 6 7">
    <location>
        <position position="224"/>
    </location>
    <ligand>
        <name>Cu cation</name>
        <dbReference type="ChEBI" id="CHEBI:23378"/>
        <label>A</label>
    </ligand>
</feature>
<feature type="binding site" evidence="2 6 7">
    <location>
        <position position="344"/>
    </location>
    <ligand>
        <name>Cu cation</name>
        <dbReference type="ChEBI" id="CHEBI:23378"/>
        <label>B</label>
    </ligand>
</feature>
<feature type="binding site" evidence="2 6 7">
    <location>
        <position position="348"/>
    </location>
    <ligand>
        <name>Cu cation</name>
        <dbReference type="ChEBI" id="CHEBI:23378"/>
        <label>B</label>
    </ligand>
</feature>
<feature type="binding site" evidence="2 6 7">
    <location>
        <position position="384"/>
    </location>
    <ligand>
        <name>Cu cation</name>
        <dbReference type="ChEBI" id="CHEBI:23378"/>
        <label>B</label>
    </ligand>
</feature>
<feature type="glycosylation site" description="N-linked (GlcNAc...) asparagine" evidence="2 7">
    <location>
        <position position="167"/>
    </location>
</feature>
<feature type="disulfide bond" evidence="2 4 6 7">
    <location>
        <begin position="93"/>
        <end position="98"/>
    </location>
</feature>
<feature type="disulfide bond" evidence="2 4 6 7">
    <location>
        <begin position="483"/>
        <end position="502"/>
    </location>
</feature>
<feature type="disulfide bond" evidence="2 4 6 7">
    <location>
        <begin position="562"/>
        <end position="609"/>
    </location>
</feature>
<feature type="helix" evidence="8">
    <location>
        <begin position="8"/>
        <end position="17"/>
    </location>
</feature>
<feature type="turn" evidence="8">
    <location>
        <begin position="18"/>
        <end position="22"/>
    </location>
</feature>
<feature type="helix" evidence="8">
    <location>
        <begin position="28"/>
        <end position="36"/>
    </location>
</feature>
<feature type="strand" evidence="8">
    <location>
        <begin position="45"/>
        <end position="50"/>
    </location>
</feature>
<feature type="helix" evidence="8">
    <location>
        <begin position="53"/>
        <end position="55"/>
    </location>
</feature>
<feature type="helix" evidence="8">
    <location>
        <begin position="56"/>
        <end position="61"/>
    </location>
</feature>
<feature type="strand" evidence="8">
    <location>
        <begin position="68"/>
        <end position="70"/>
    </location>
</feature>
<feature type="helix" evidence="8">
    <location>
        <begin position="77"/>
        <end position="90"/>
    </location>
</feature>
<feature type="strand" evidence="8">
    <location>
        <begin position="93"/>
        <end position="95"/>
    </location>
</feature>
<feature type="helix" evidence="8">
    <location>
        <begin position="96"/>
        <end position="105"/>
    </location>
</feature>
<feature type="turn" evidence="8">
    <location>
        <begin position="106"/>
        <end position="109"/>
    </location>
</feature>
<feature type="helix" evidence="8">
    <location>
        <begin position="112"/>
        <end position="125"/>
    </location>
</feature>
<feature type="helix" evidence="9">
    <location>
        <begin position="127"/>
        <end position="129"/>
    </location>
</feature>
<feature type="helix" evidence="8">
    <location>
        <begin position="137"/>
        <end position="140"/>
    </location>
</feature>
<feature type="turn" evidence="8">
    <location>
        <begin position="142"/>
        <end position="145"/>
    </location>
</feature>
<feature type="helix" evidence="8">
    <location>
        <begin position="148"/>
        <end position="160"/>
    </location>
</feature>
<feature type="turn" evidence="9">
    <location>
        <begin position="174"/>
        <end position="176"/>
    </location>
</feature>
<feature type="helix" evidence="8">
    <location>
        <begin position="182"/>
        <end position="185"/>
    </location>
</feature>
<feature type="helix" evidence="8">
    <location>
        <begin position="188"/>
        <end position="200"/>
    </location>
</feature>
<feature type="strand" evidence="8">
    <location>
        <begin position="209"/>
        <end position="211"/>
    </location>
</feature>
<feature type="helix" evidence="8">
    <location>
        <begin position="218"/>
        <end position="236"/>
    </location>
</feature>
<feature type="turn" evidence="8">
    <location>
        <begin position="237"/>
        <end position="239"/>
    </location>
</feature>
<feature type="strand" evidence="9">
    <location>
        <begin position="250"/>
        <end position="252"/>
    </location>
</feature>
<feature type="strand" evidence="8">
    <location>
        <begin position="263"/>
        <end position="265"/>
    </location>
</feature>
<feature type="strand" evidence="8">
    <location>
        <begin position="273"/>
        <end position="275"/>
    </location>
</feature>
<feature type="turn" evidence="8">
    <location>
        <begin position="281"/>
        <end position="283"/>
    </location>
</feature>
<feature type="helix" evidence="8">
    <location>
        <begin position="286"/>
        <end position="302"/>
    </location>
</feature>
<feature type="strand" evidence="8">
    <location>
        <begin position="303"/>
        <end position="306"/>
    </location>
</feature>
<feature type="strand" evidence="8">
    <location>
        <begin position="308"/>
        <end position="310"/>
    </location>
</feature>
<feature type="strand" evidence="8">
    <location>
        <begin position="312"/>
        <end position="314"/>
    </location>
</feature>
<feature type="helix" evidence="8">
    <location>
        <begin position="320"/>
        <end position="328"/>
    </location>
</feature>
<feature type="turn" evidence="8">
    <location>
        <begin position="337"/>
        <end position="339"/>
    </location>
</feature>
<feature type="helix" evidence="8">
    <location>
        <begin position="343"/>
        <end position="352"/>
    </location>
</feature>
<feature type="helix" evidence="8">
    <location>
        <begin position="353"/>
        <end position="355"/>
    </location>
</feature>
<feature type="helix" evidence="8">
    <location>
        <begin position="367"/>
        <end position="369"/>
    </location>
</feature>
<feature type="turn" evidence="8">
    <location>
        <begin position="371"/>
        <end position="373"/>
    </location>
</feature>
<feature type="helix" evidence="9">
    <location>
        <begin position="374"/>
        <end position="376"/>
    </location>
</feature>
<feature type="helix" evidence="8">
    <location>
        <begin position="379"/>
        <end position="395"/>
    </location>
</feature>
<feature type="helix" evidence="8">
    <location>
        <begin position="403"/>
        <end position="406"/>
    </location>
</feature>
<feature type="strand" evidence="8">
    <location>
        <begin position="409"/>
        <end position="420"/>
    </location>
</feature>
<feature type="strand" evidence="8">
    <location>
        <begin position="423"/>
        <end position="426"/>
    </location>
</feature>
<feature type="strand" evidence="8">
    <location>
        <begin position="429"/>
        <end position="432"/>
    </location>
</feature>
<feature type="helix" evidence="8">
    <location>
        <begin position="433"/>
        <end position="436"/>
    </location>
</feature>
<feature type="strand" evidence="9">
    <location>
        <begin position="441"/>
        <end position="443"/>
    </location>
</feature>
<feature type="strand" evidence="8">
    <location>
        <begin position="449"/>
        <end position="452"/>
    </location>
</feature>
<feature type="strand" evidence="8">
    <location>
        <begin position="455"/>
        <end position="457"/>
    </location>
</feature>
<feature type="strand" evidence="8">
    <location>
        <begin position="461"/>
        <end position="468"/>
    </location>
</feature>
<feature type="strand" evidence="8">
    <location>
        <begin position="470"/>
        <end position="472"/>
    </location>
</feature>
<feature type="strand" evidence="8">
    <location>
        <begin position="475"/>
        <end position="483"/>
    </location>
</feature>
<feature type="strand" evidence="8">
    <location>
        <begin position="488"/>
        <end position="490"/>
    </location>
</feature>
<feature type="turn" evidence="8">
    <location>
        <begin position="497"/>
        <end position="501"/>
    </location>
</feature>
<feature type="strand" evidence="8">
    <location>
        <begin position="503"/>
        <end position="511"/>
    </location>
</feature>
<feature type="strand" evidence="8">
    <location>
        <begin position="517"/>
        <end position="522"/>
    </location>
</feature>
<feature type="turn" evidence="8">
    <location>
        <begin position="523"/>
        <end position="525"/>
    </location>
</feature>
<feature type="helix" evidence="8">
    <location>
        <begin position="536"/>
        <end position="543"/>
    </location>
</feature>
<feature type="strand" evidence="8">
    <location>
        <begin position="546"/>
        <end position="548"/>
    </location>
</feature>
<feature type="strand" evidence="8">
    <location>
        <begin position="558"/>
        <end position="560"/>
    </location>
</feature>
<feature type="strand" evidence="8">
    <location>
        <begin position="563"/>
        <end position="565"/>
    </location>
</feature>
<feature type="helix" evidence="8">
    <location>
        <begin position="566"/>
        <end position="568"/>
    </location>
</feature>
<feature type="strand" evidence="8">
    <location>
        <begin position="578"/>
        <end position="587"/>
    </location>
</feature>
<feature type="helix" evidence="8">
    <location>
        <begin position="589"/>
        <end position="592"/>
    </location>
</feature>
<feature type="turn" evidence="8">
    <location>
        <begin position="622"/>
        <end position="627"/>
    </location>
</feature>
<feature type="turn" evidence="8">
    <location>
        <begin position="633"/>
        <end position="635"/>
    </location>
</feature>
<feature type="helix" evidence="8">
    <location>
        <begin position="636"/>
        <end position="638"/>
    </location>
</feature>
<feature type="strand" evidence="8">
    <location>
        <begin position="642"/>
        <end position="651"/>
    </location>
</feature>
<sequence>DALGTGNAQKQQDINHLLDKIYEPTKYPDLKEIAENFNPLGDTSIYNDHGAAVETLMKELNDHRLLEQRHWYSLFNTRQRKEALMLFAVLNQCKEWYCFRSNAAYFRERMNEGEFVYALYVSVIHSKLGDGIVLPPLYQITPHMFTNSEVIDKAYSAKMTQKQGTFNVSFTGTKKNREQRVAYFGEDIGMNIHHVTWHMDFPFWWEDSYGYHLDRKGELFFWVHHQLTARFDFERLSNWLDPVDELHWDRIIREGFAPLTSYKYGGEFPVRPDNIHFEDVDGVAHVHDLEITESRIHEAIDHGYITDSDGHTIDIRQPKGIELLGDIIESSKYSSNVQYYGSLHNTAHVMLGRQGDPHGKFNLPPGVMEHFETATRDPSFFRLHKYMDNIFKKHTDSFPPYTHDNLEFSGMVVNGVAIDGELITFFDEFQYSLINAVDSGENIEDVEINARVHRLNHKEFTYKITMSNNNDGERLATFRIFLCPIEDNNGITLTLDEARWFCIELDKFFQKVPKGPETIERSSKDSSVTVPDMPSFQSLKEQADNAVNGGHDLDLSAYERSCGIPDRMLLPKSKPEGMEFNLYVAVTDGDKDTEGHNGGHDYGGTHAQCGVHGEAYPDNRPLGYPLERRIPDERVIDGVSNIKHVVVKIVHHLEHHD</sequence>
<organism>
    <name type="scientific">Panulirus interruptus</name>
    <name type="common">California spiny lobster</name>
    <name type="synonym">Palinurus interruptus</name>
    <dbReference type="NCBI Taxonomy" id="6735"/>
    <lineage>
        <taxon>Eukaryota</taxon>
        <taxon>Metazoa</taxon>
        <taxon>Ecdysozoa</taxon>
        <taxon>Arthropoda</taxon>
        <taxon>Crustacea</taxon>
        <taxon>Multicrustacea</taxon>
        <taxon>Malacostraca</taxon>
        <taxon>Eumalacostraca</taxon>
        <taxon>Eucarida</taxon>
        <taxon>Decapoda</taxon>
        <taxon>Pleocyemata</taxon>
        <taxon>Achelata</taxon>
        <taxon>Palinuroidea</taxon>
        <taxon>Palinuridae</taxon>
        <taxon>Panulirus</taxon>
    </lineage>
</organism>
<dbReference type="PIR" id="A24183">
    <property type="entry name" value="BHLOA"/>
</dbReference>
<dbReference type="PDB" id="1HC1">
    <property type="method" value="X-ray"/>
    <property type="resolution" value="3.20 A"/>
    <property type="chains" value="A/B/C/D/E/F=1-657"/>
</dbReference>
<dbReference type="PDB" id="1HCY">
    <property type="method" value="X-ray"/>
    <property type="resolution" value="3.20 A"/>
    <property type="chains" value="A/B/C/D/E/F=1-657"/>
</dbReference>
<dbReference type="PDBsum" id="1HC1"/>
<dbReference type="PDBsum" id="1HCY"/>
<dbReference type="SMR" id="P04254"/>
<dbReference type="iPTMnet" id="P04254"/>
<dbReference type="EvolutionaryTrace" id="P04254"/>
<dbReference type="GO" id="GO:0005576">
    <property type="term" value="C:extracellular region"/>
    <property type="evidence" value="ECO:0007669"/>
    <property type="project" value="UniProtKB-SubCell"/>
</dbReference>
<dbReference type="GO" id="GO:0046872">
    <property type="term" value="F:metal ion binding"/>
    <property type="evidence" value="ECO:0007669"/>
    <property type="project" value="UniProtKB-KW"/>
</dbReference>
<dbReference type="GO" id="GO:0016491">
    <property type="term" value="F:oxidoreductase activity"/>
    <property type="evidence" value="ECO:0007669"/>
    <property type="project" value="InterPro"/>
</dbReference>
<dbReference type="GO" id="GO:0005344">
    <property type="term" value="F:oxygen carrier activity"/>
    <property type="evidence" value="ECO:0007669"/>
    <property type="project" value="UniProtKB-KW"/>
</dbReference>
<dbReference type="Gene3D" id="1.10.1280.10">
    <property type="entry name" value="Di-copper center containing domain from catechol oxidase"/>
    <property type="match status" value="1"/>
</dbReference>
<dbReference type="Gene3D" id="2.60.40.1520">
    <property type="entry name" value="Hemocyanin, C-terminal domain"/>
    <property type="match status" value="1"/>
</dbReference>
<dbReference type="Gene3D" id="1.20.1370.10">
    <property type="entry name" value="Hemocyanin, N-terminal domain"/>
    <property type="match status" value="1"/>
</dbReference>
<dbReference type="InterPro" id="IPR008922">
    <property type="entry name" value="Di-copper_centre_dom_sf"/>
</dbReference>
<dbReference type="InterPro" id="IPR013788">
    <property type="entry name" value="Hemocyanin/hexamerin"/>
</dbReference>
<dbReference type="InterPro" id="IPR000896">
    <property type="entry name" value="Hemocyanin/hexamerin_mid_dom"/>
</dbReference>
<dbReference type="InterPro" id="IPR005203">
    <property type="entry name" value="Hemocyanin_C"/>
</dbReference>
<dbReference type="InterPro" id="IPR037020">
    <property type="entry name" value="Hemocyanin_C_sf"/>
</dbReference>
<dbReference type="InterPro" id="IPR005204">
    <property type="entry name" value="Hemocyanin_N"/>
</dbReference>
<dbReference type="InterPro" id="IPR036697">
    <property type="entry name" value="Hemocyanin_N_sf"/>
</dbReference>
<dbReference type="InterPro" id="IPR014756">
    <property type="entry name" value="Ig_E-set"/>
</dbReference>
<dbReference type="InterPro" id="IPR002227">
    <property type="entry name" value="Tyrosinase_Cu-bd"/>
</dbReference>
<dbReference type="PANTHER" id="PTHR11511:SF5">
    <property type="entry name" value="FAT-BODY PROTEIN 1-RELATED"/>
    <property type="match status" value="1"/>
</dbReference>
<dbReference type="PANTHER" id="PTHR11511">
    <property type="entry name" value="LARVAL STORAGE PROTEIN/PHENOLOXIDASE"/>
    <property type="match status" value="1"/>
</dbReference>
<dbReference type="Pfam" id="PF03723">
    <property type="entry name" value="Hemocyanin_C"/>
    <property type="match status" value="1"/>
</dbReference>
<dbReference type="Pfam" id="PF00372">
    <property type="entry name" value="Hemocyanin_M"/>
    <property type="match status" value="1"/>
</dbReference>
<dbReference type="Pfam" id="PF03722">
    <property type="entry name" value="Hemocyanin_N"/>
    <property type="match status" value="1"/>
</dbReference>
<dbReference type="PRINTS" id="PR00187">
    <property type="entry name" value="HAEMOCYANIN"/>
</dbReference>
<dbReference type="SUPFAM" id="SSF48056">
    <property type="entry name" value="Di-copper centre-containing domain"/>
    <property type="match status" value="1"/>
</dbReference>
<dbReference type="SUPFAM" id="SSF81296">
    <property type="entry name" value="E set domains"/>
    <property type="match status" value="1"/>
</dbReference>
<dbReference type="SUPFAM" id="SSF48050">
    <property type="entry name" value="Hemocyanin, N-terminal domain"/>
    <property type="match status" value="1"/>
</dbReference>
<dbReference type="PROSITE" id="PS00209">
    <property type="entry name" value="HEMOCYANIN_1"/>
    <property type="match status" value="1"/>
</dbReference>
<dbReference type="PROSITE" id="PS00210">
    <property type="entry name" value="HEMOCYANIN_2"/>
    <property type="match status" value="1"/>
</dbReference>
<dbReference type="PROSITE" id="PS00498">
    <property type="entry name" value="TYROSINASE_2"/>
    <property type="match status" value="1"/>
</dbReference>
<reference key="1">
    <citation type="journal article" date="1986" name="FEBS Lett.">
        <title>Structure of arthropod hemocyanin.</title>
        <authorList>
            <person name="Bak H.J."/>
            <person name="Neuteboom B."/>
            <person name="Jekel P.A."/>
            <person name="Soeter N.M."/>
            <person name="Vereijken J.M."/>
            <person name="Beintema J.J."/>
        </authorList>
    </citation>
    <scope>PROTEIN SEQUENCE</scope>
</reference>
<reference key="2">
    <citation type="journal article" date="1987" name="Eur. J. Biochem.">
        <title>Panulirus interruptus hemocyanin. The elucidation of the complete amino acid sequence of subunit a.</title>
        <authorList>
            <person name="Bak H.J."/>
            <person name="Beintema J.J."/>
        </authorList>
    </citation>
    <scope>PROTEIN SEQUENCE</scope>
</reference>
<reference key="3">
    <citation type="journal article" date="1987" name="Eur. J. Biochem.">
        <title>Primary and tertiary structures of the first domain of Panulirus interruptus hemocyanin and comparison of arthropod hemocyanins.</title>
        <authorList>
            <person name="Soeter N.M."/>
            <person name="Jekel P.A."/>
            <person name="Beintema J.J."/>
            <person name="Volbeda A."/>
            <person name="Hol W.G.J."/>
        </authorList>
    </citation>
    <scope>PROTEIN SEQUENCE OF 1-158</scope>
</reference>
<reference key="4">
    <citation type="journal article" date="1984" name="Biochim. Biophys. Acta">
        <title>Panulirus interruptus hemocyanin. The amino-acid sequence of the region containing one copper-binding site and the sites susceptible to limited proteolysis.</title>
        <authorList>
            <person name="Vereijken J.M."/>
            <person name="de Vlieg J."/>
            <person name="Beintema J.J."/>
        </authorList>
    </citation>
    <scope>PROTEIN SEQUENCE OF 160-230</scope>
</reference>
<reference key="5">
    <citation type="journal article" date="1988" name="Eur. J. Biochem.">
        <title>Panulirus interruptus hemocyanin. The amino acid sequence of subunit b and anomalous behaviour of subunits a and b on polyacrylamide gel electrophoresis in the presence of SDS.</title>
        <authorList>
            <person name="Jekel P.A."/>
            <person name="Bak H.J."/>
            <person name="Soeter N.M."/>
            <person name="Verejken J.M."/>
            <person name="Beintema J.J."/>
        </authorList>
    </citation>
    <scope>SUBCELLULAR LOCATION</scope>
    <scope>TISSUE SPECIFICITY</scope>
</reference>
<reference key="6">
    <citation type="journal article" date="1984" name="Nature">
        <title>3.2-A structure of the copper-containing, oxygen-carrying protein Panulirus interruptus haemocyanin.</title>
        <authorList>
            <person name="Gaykema W.P.J."/>
            <person name="Hol W.G.J."/>
            <person name="Vereijken J.M."/>
            <person name="Soeter N.M."/>
            <person name="Bak H.J."/>
            <person name="Beintema J.J."/>
        </authorList>
    </citation>
    <scope>X-RAY CRYSTALLOGRAPHY (3.2 ANGSTROMS)</scope>
    <scope>FUNCTION</scope>
    <scope>SUBUNIT</scope>
    <scope>DISULFIDE BONDS</scope>
</reference>
<reference key="7">
    <citation type="journal article" date="1989" name="J. Mol. Biol.">
        <title>Crystal structure of hexameric haemocyanin from Panulirus interruptus refined at 3.2-A resolution.</title>
        <authorList>
            <person name="Volbeda A."/>
            <person name="Hol W.G.J."/>
        </authorList>
    </citation>
    <scope>X-RAY CRYSTALLOGRAPHY (3.2 ANGSTROMS)</scope>
    <scope>FUNCTION</scope>
    <scope>SUBUNIT</scope>
    <scope>COPPER-BINDING SITES</scope>
    <scope>DISULFIDE BONDS</scope>
    <scope>GLYCOSYLATION AT ASN-167</scope>
</reference>
<keyword id="KW-0002">3D-structure</keyword>
<keyword id="KW-0186">Copper</keyword>
<keyword id="KW-0903">Direct protein sequencing</keyword>
<keyword id="KW-1015">Disulfide bond</keyword>
<keyword id="KW-0325">Glycoprotein</keyword>
<keyword id="KW-0479">Metal-binding</keyword>
<keyword id="KW-0561">Oxygen transport</keyword>
<keyword id="KW-0964">Secreted</keyword>
<keyword id="KW-0813">Transport</keyword>
<name>HCYA_PANIN</name>
<proteinExistence type="evidence at protein level"/>
<evidence type="ECO:0000256" key="1">
    <source>
        <dbReference type="SAM" id="MobiDB-lite"/>
    </source>
</evidence>
<evidence type="ECO:0000269" key="2">
    <source>
    </source>
</evidence>
<evidence type="ECO:0000269" key="3">
    <source>
    </source>
</evidence>
<evidence type="ECO:0000269" key="4">
    <source ref="6"/>
</evidence>
<evidence type="ECO:0000305" key="5"/>
<evidence type="ECO:0007744" key="6">
    <source>
        <dbReference type="PDB" id="1HC1"/>
    </source>
</evidence>
<evidence type="ECO:0007744" key="7">
    <source>
        <dbReference type="PDB" id="1HCY"/>
    </source>
</evidence>
<evidence type="ECO:0007829" key="8">
    <source>
        <dbReference type="PDB" id="1HC1"/>
    </source>
</evidence>
<evidence type="ECO:0007829" key="9">
    <source>
        <dbReference type="PDB" id="1HCY"/>
    </source>
</evidence>
<comment type="function">
    <text evidence="2 4">Hemocyanins are copper-containing oxygen carriers occurring freely dissolved in the hemolymph of many mollusks and arthropods.</text>
</comment>
<comment type="subunit">
    <text evidence="2 4">Hexamer of a number of different chains, of which A, B, and C have been identified.</text>
</comment>
<comment type="subcellular location">
    <subcellularLocation>
        <location evidence="3">Secreted</location>
        <location evidence="3">Extracellular space</location>
    </subcellularLocation>
</comment>
<comment type="tissue specificity">
    <text evidence="3">Hemolymph.</text>
</comment>
<comment type="miscellaneous">
    <text evidence="2 4">The A chain contains two copper-binding sites (PubMed:2585484, Ref.6). Three histidine residues are ligands to each copper ion (PubMed:2585484, Ref.6).</text>
</comment>
<comment type="similarity">
    <text evidence="5">Belongs to the tyrosinase family. Hemocyanin subfamily.</text>
</comment>
<accession>P04254</accession>
<protein>
    <recommendedName>
        <fullName>Hemocyanin A chain</fullName>
    </recommendedName>
</protein>